<gene>
    <name evidence="4" type="primary">PISD</name>
</gene>
<proteinExistence type="evidence at transcript level"/>
<sequence length="409" mass="46601">MATSVGHRCLGLLHGVAPWRSSLHPCEITALSQSLQPLRKLPFRAFRTDARKIHTAPARTMFLLRPVPILLATGGGYAGYRQYEKYRERELEKLGLEIPPKLAGHWEVALYKSVPTRLLSRAWGRLNQVELPHWLRRPVYSLYIWTFGVNMKEAAVEDLHHYRNLSEFFRRKLKPQARPVCGLHSVISPSDGRILNFGQVKNCEVEQVKGVTYSLESFLGPRTCTEDLPFPPATSCDSFKNQLVTREGNELYHCVIYLAPGDYHCFHSPTDWTVSHRRHFPGSLMSVNPGMARWIKELFCHNERVVLTGDWKHGFFSLTAVGATNVGSIRIYFDQDLHTNSPRHSKGSYNDFSFVTHTNREGVPMRKGEHLGEFNLGSTIVLIFEAPKDFNFQLKTGQKIRFGEALGSL</sequence>
<reference key="1">
    <citation type="submission" date="2004-11" db="EMBL/GenBank/DDBJ databases">
        <authorList>
            <consortium name="The German cDNA consortium"/>
        </authorList>
    </citation>
    <scope>NUCLEOTIDE SEQUENCE [LARGE SCALE MRNA]</scope>
    <source>
        <tissue>Heart</tissue>
    </source>
</reference>
<dbReference type="EC" id="4.1.1.65" evidence="2 4"/>
<dbReference type="EMBL" id="CR859764">
    <property type="protein sequence ID" value="CAH91922.1"/>
    <property type="molecule type" value="mRNA"/>
</dbReference>
<dbReference type="RefSeq" id="NP_001126113.1">
    <property type="nucleotide sequence ID" value="NM_001132641.1"/>
</dbReference>
<dbReference type="SMR" id="Q5R8I8"/>
<dbReference type="FunCoup" id="Q5R8I8">
    <property type="interactions" value="2831"/>
</dbReference>
<dbReference type="STRING" id="9601.ENSPPYP00000013093"/>
<dbReference type="Ensembl" id="ENSPPYT00000013627.2">
    <property type="protein sequence ID" value="ENSPPYP00000013093.1"/>
    <property type="gene ID" value="ENSPPYG00000011738.2"/>
</dbReference>
<dbReference type="GeneID" id="100173069"/>
<dbReference type="KEGG" id="pon:100173069"/>
<dbReference type="CTD" id="23761"/>
<dbReference type="eggNOG" id="KOG2420">
    <property type="taxonomic scope" value="Eukaryota"/>
</dbReference>
<dbReference type="GeneTree" id="ENSGT00390000013484"/>
<dbReference type="HOGENOM" id="CLU_029061_3_0_1"/>
<dbReference type="InParanoid" id="Q5R8I8"/>
<dbReference type="OMA" id="KDYHHYH"/>
<dbReference type="OrthoDB" id="4330at2759"/>
<dbReference type="TreeFam" id="TF313148"/>
<dbReference type="UniPathway" id="UPA00558"/>
<dbReference type="Proteomes" id="UP000001595">
    <property type="component" value="Chromosome 22"/>
</dbReference>
<dbReference type="GO" id="GO:0005811">
    <property type="term" value="C:lipid droplet"/>
    <property type="evidence" value="ECO:0000250"/>
    <property type="project" value="UniProtKB"/>
</dbReference>
<dbReference type="GO" id="GO:0005743">
    <property type="term" value="C:mitochondrial inner membrane"/>
    <property type="evidence" value="ECO:0007669"/>
    <property type="project" value="UniProtKB-SubCell"/>
</dbReference>
<dbReference type="GO" id="GO:0005739">
    <property type="term" value="C:mitochondrion"/>
    <property type="evidence" value="ECO:0000250"/>
    <property type="project" value="UniProtKB"/>
</dbReference>
<dbReference type="GO" id="GO:0004609">
    <property type="term" value="F:phosphatidylserine decarboxylase activity"/>
    <property type="evidence" value="ECO:0000250"/>
    <property type="project" value="UniProtKB"/>
</dbReference>
<dbReference type="GO" id="GO:0140042">
    <property type="term" value="P:lipid droplet formation"/>
    <property type="evidence" value="ECO:0000250"/>
    <property type="project" value="UniProtKB"/>
</dbReference>
<dbReference type="GO" id="GO:0035694">
    <property type="term" value="P:mitochondrial protein catabolic process"/>
    <property type="evidence" value="ECO:0000250"/>
    <property type="project" value="UniProtKB"/>
</dbReference>
<dbReference type="GO" id="GO:0006646">
    <property type="term" value="P:phosphatidylethanolamine biosynthetic process"/>
    <property type="evidence" value="ECO:0000250"/>
    <property type="project" value="UniProtKB"/>
</dbReference>
<dbReference type="GO" id="GO:0016540">
    <property type="term" value="P:protein autoprocessing"/>
    <property type="evidence" value="ECO:0007669"/>
    <property type="project" value="UniProtKB-UniRule"/>
</dbReference>
<dbReference type="GO" id="GO:0010821">
    <property type="term" value="P:regulation of mitochondrion organization"/>
    <property type="evidence" value="ECO:0000250"/>
    <property type="project" value="UniProtKB"/>
</dbReference>
<dbReference type="HAMAP" id="MF_03208">
    <property type="entry name" value="PS_decarb_PSD_B_type1_euk"/>
    <property type="match status" value="1"/>
</dbReference>
<dbReference type="InterPro" id="IPR003817">
    <property type="entry name" value="PS_Dcarbxylase"/>
</dbReference>
<dbReference type="InterPro" id="IPR033177">
    <property type="entry name" value="PSD-B"/>
</dbReference>
<dbReference type="InterPro" id="IPR033661">
    <property type="entry name" value="PSD_type1_euk"/>
</dbReference>
<dbReference type="NCBIfam" id="TIGR00163">
    <property type="entry name" value="PS_decarb"/>
    <property type="match status" value="1"/>
</dbReference>
<dbReference type="PANTHER" id="PTHR10067">
    <property type="entry name" value="PHOSPHATIDYLSERINE DECARBOXYLASE"/>
    <property type="match status" value="1"/>
</dbReference>
<dbReference type="PANTHER" id="PTHR10067:SF6">
    <property type="entry name" value="PHOSPHATIDYLSERINE DECARBOXYLASE PROENZYME, MITOCHONDRIAL"/>
    <property type="match status" value="1"/>
</dbReference>
<dbReference type="Pfam" id="PF02666">
    <property type="entry name" value="PS_Dcarbxylase"/>
    <property type="match status" value="1"/>
</dbReference>
<evidence type="ECO:0000250" key="1">
    <source>
        <dbReference type="UniProtKB" id="A0A8H4BVL9"/>
    </source>
</evidence>
<evidence type="ECO:0000250" key="2">
    <source>
        <dbReference type="UniProtKB" id="Q9UG56"/>
    </source>
</evidence>
<evidence type="ECO:0000255" key="3"/>
<evidence type="ECO:0000255" key="4">
    <source>
        <dbReference type="HAMAP-Rule" id="MF_03208"/>
    </source>
</evidence>
<organism>
    <name type="scientific">Pongo abelii</name>
    <name type="common">Sumatran orangutan</name>
    <name type="synonym">Pongo pygmaeus abelii</name>
    <dbReference type="NCBI Taxonomy" id="9601"/>
    <lineage>
        <taxon>Eukaryota</taxon>
        <taxon>Metazoa</taxon>
        <taxon>Chordata</taxon>
        <taxon>Craniata</taxon>
        <taxon>Vertebrata</taxon>
        <taxon>Euteleostomi</taxon>
        <taxon>Mammalia</taxon>
        <taxon>Eutheria</taxon>
        <taxon>Euarchontoglires</taxon>
        <taxon>Primates</taxon>
        <taxon>Haplorrhini</taxon>
        <taxon>Catarrhini</taxon>
        <taxon>Hominidae</taxon>
        <taxon>Pongo</taxon>
    </lineage>
</organism>
<protein>
    <recommendedName>
        <fullName evidence="4">Phosphatidylserine decarboxylase proenzyme, mitochondrial</fullName>
        <ecNumber evidence="2 4">4.1.1.65</ecNumber>
    </recommendedName>
    <component>
        <recommendedName>
            <fullName evidence="4">Phosphatidylserine decarboxylase beta chain</fullName>
        </recommendedName>
    </component>
    <component>
        <recommendedName>
            <fullName evidence="4">Phosphatidylserine decarboxylase alpha chain</fullName>
        </recommendedName>
    </component>
</protein>
<keyword id="KW-0963">Cytoplasm</keyword>
<keyword id="KW-0210">Decarboxylase</keyword>
<keyword id="KW-0444">Lipid biosynthesis</keyword>
<keyword id="KW-0551">Lipid droplet</keyword>
<keyword id="KW-0443">Lipid metabolism</keyword>
<keyword id="KW-0456">Lyase</keyword>
<keyword id="KW-0472">Membrane</keyword>
<keyword id="KW-0496">Mitochondrion</keyword>
<keyword id="KW-0999">Mitochondrion inner membrane</keyword>
<keyword id="KW-0594">Phospholipid biosynthesis</keyword>
<keyword id="KW-1208">Phospholipid metabolism</keyword>
<keyword id="KW-0670">Pyruvate</keyword>
<keyword id="KW-1185">Reference proteome</keyword>
<keyword id="KW-0809">Transit peptide</keyword>
<keyword id="KW-0812">Transmembrane</keyword>
<keyword id="KW-1133">Transmembrane helix</keyword>
<keyword id="KW-0865">Zymogen</keyword>
<comment type="function">
    <text evidence="1 4">Catalyzes the formation of phosphatidylethanolamine (PtdEtn) from phosphatidylserine (PtdSer). Plays a central role in phospholipid metabolism and in the interorganelle trafficking of phosphatidylserine. May be involved in lipid droplet biogenesis at the endoplasmic reticulum membrane (By similarity).</text>
</comment>
<comment type="catalytic activity">
    <reaction evidence="4">
        <text>a 1,2-diacyl-sn-glycero-3-phospho-L-serine + H(+) = a 1,2-diacyl-sn-glycero-3-phosphoethanolamine + CO2</text>
        <dbReference type="Rhea" id="RHEA:20828"/>
        <dbReference type="ChEBI" id="CHEBI:15378"/>
        <dbReference type="ChEBI" id="CHEBI:16526"/>
        <dbReference type="ChEBI" id="CHEBI:57262"/>
        <dbReference type="ChEBI" id="CHEBI:64612"/>
        <dbReference type="EC" id="4.1.1.65"/>
    </reaction>
    <physiologicalReaction direction="left-to-right" evidence="2">
        <dbReference type="Rhea" id="RHEA:20829"/>
    </physiologicalReaction>
</comment>
<comment type="cofactor">
    <cofactor evidence="4">
        <name>pyruvate</name>
        <dbReference type="ChEBI" id="CHEBI:15361"/>
    </cofactor>
    <text evidence="4">Binds 1 pyruvoyl group covalently per subunit.</text>
</comment>
<comment type="pathway">
    <text evidence="2">Phospholipid metabolism; phosphatidylethanolamine biosynthesis.</text>
</comment>
<comment type="subunit">
    <text evidence="4">Heterodimer of a large membrane-associated beta subunit and a small pyruvoyl-containing alpha subunit.</text>
</comment>
<comment type="subcellular location">
    <subcellularLocation>
        <location evidence="2">Mitochondrion inner membrane</location>
    </subcellularLocation>
    <subcellularLocation>
        <location evidence="2">Lipid droplet</location>
    </subcellularLocation>
    <text evidence="2">Predominantly localizes to lipid droplets in lipid-replete conditions, and to mitochondria in lipid-deplete conditions.</text>
</comment>
<comment type="subcellular location">
    <molecule>Phosphatidylserine decarboxylase beta chain</molecule>
    <subcellularLocation>
        <location evidence="4">Mitochondrion inner membrane</location>
        <topology evidence="4">Single-pass membrane protein</topology>
        <orientation evidence="4">Intermembrane side</orientation>
    </subcellularLocation>
</comment>
<comment type="subcellular location">
    <molecule>Phosphatidylserine decarboxylase alpha chain</molecule>
    <subcellularLocation>
        <location evidence="4">Mitochondrion inner membrane</location>
        <topology evidence="4">Peripheral membrane protein</topology>
        <orientation evidence="4">Intermembrane side</orientation>
    </subcellularLocation>
    <subcellularLocation>
        <location evidence="2">Cytoplasm</location>
    </subcellularLocation>
    <text evidence="4">Anchored to the mitochondrial inner membrane through its interaction with the integral membrane beta chain.</text>
</comment>
<comment type="PTM">
    <text evidence="4">Is synthesized initially as an inactive proenzyme. Formation of the active enzyme involves a self-maturation process in which the active site pyruvoyl group is generated from an internal serine residue via an autocatalytic post-translational modification. Two non-identical subunits are generated from the proenzyme in this reaction, and the pyruvate is formed at the N-terminus of the alpha chain, which is derived from the carboxyl end of the proenzyme. The autoendoproteolytic cleavage occurs by a canonical serine protease mechanism, in which the side chain hydroxyl group of the serine supplies its oxygen atom to form the C-terminus of the beta chain, while the remainder of the serine residue undergoes an oxidative deamination to produce ammonia and the pyruvoyl prosthetic group on the alpha chain. During this reaction, the Ser that is part of the protease active site of the proenzyme becomes the pyruvoyl prosthetic group, which constitutes an essential element of the active site of the mature decarboxylase.</text>
</comment>
<comment type="similarity">
    <text evidence="4">Belongs to the phosphatidylserine decarboxylase family. PSD-B subfamily. Eukaryotic type I sub-subfamily.</text>
</comment>
<name>PISD_PONAB</name>
<accession>Q5R8I8</accession>
<feature type="transit peptide" description="Mitochondrion" evidence="3">
    <location>
        <begin position="1"/>
        <end position="52"/>
    </location>
</feature>
<feature type="chain" id="PRO_0000435573" description="Phosphatidylserine decarboxylase proenzyme, mitochondrial">
    <location>
        <begin position="53"/>
        <end position="409"/>
    </location>
</feature>
<feature type="chain" id="PRO_0000029839" description="Phosphatidylserine decarboxylase beta chain" evidence="4">
    <location>
        <begin position="53"/>
        <end position="377"/>
    </location>
</feature>
<feature type="chain" id="PRO_0000029840" description="Phosphatidylserine decarboxylase alpha chain" evidence="4">
    <location>
        <begin position="378"/>
        <end position="409"/>
    </location>
</feature>
<feature type="topological domain" description="Mitochondrial matrix" evidence="4">
    <location>
        <begin position="53"/>
        <end position="63"/>
    </location>
</feature>
<feature type="transmembrane region" description="Helical" evidence="4">
    <location>
        <begin position="64"/>
        <end position="82"/>
    </location>
</feature>
<feature type="topological domain" description="Mitochondrial intermembrane" evidence="4">
    <location>
        <begin position="83"/>
        <end position="409"/>
    </location>
</feature>
<feature type="active site" description="Charge relay system; for autoendoproteolytic cleavage activity" evidence="4">
    <location>
        <position position="191"/>
    </location>
</feature>
<feature type="active site" description="Charge relay system; for autoendoproteolytic cleavage activity" evidence="4">
    <location>
        <position position="267"/>
    </location>
</feature>
<feature type="active site" description="Charge relay system; for autoendoproteolytic cleavage activity" evidence="4">
    <location>
        <position position="378"/>
    </location>
</feature>
<feature type="active site" description="Schiff-base intermediate with substrate; via pyruvic acid; for decarboxylase activity" evidence="4">
    <location>
        <position position="378"/>
    </location>
</feature>
<feature type="site" description="Cleavage (non-hydrolytic); by autocatalysis" evidence="4">
    <location>
        <begin position="377"/>
        <end position="378"/>
    </location>
</feature>
<feature type="modified residue" description="Pyruvic acid (Ser); by autocatalysis" evidence="4">
    <location>
        <position position="378"/>
    </location>
</feature>